<accession>P54717</accession>
<comment type="function">
    <text evidence="3">Positive regulator of the glv operon expression, which consists of GlvA, GlvR and GlvC.</text>
</comment>
<comment type="induction">
    <text>By maltose; repressed by glucose.</text>
</comment>
<name>GLVR_BACSU</name>
<feature type="chain" id="PRO_0000068622" description="HTH-type transcriptional regulator GlvR">
    <location>
        <begin position="1"/>
        <end position="254"/>
    </location>
</feature>
<feature type="domain" description="HTH rpiR-type" evidence="1">
    <location>
        <begin position="1"/>
        <end position="77"/>
    </location>
</feature>
<feature type="domain" description="SIS" evidence="2">
    <location>
        <begin position="106"/>
        <end position="248"/>
    </location>
</feature>
<feature type="DNA-binding region" description="H-T-H motif" evidence="1">
    <location>
        <begin position="37"/>
        <end position="56"/>
    </location>
</feature>
<gene>
    <name type="primary">glvR</name>
    <name type="synonym">yfiA</name>
    <name type="ordered locus">BSU08190</name>
</gene>
<keyword id="KW-0010">Activator</keyword>
<keyword id="KW-0238">DNA-binding</keyword>
<keyword id="KW-1185">Reference proteome</keyword>
<keyword id="KW-0804">Transcription</keyword>
<keyword id="KW-0805">Transcription regulation</keyword>
<proteinExistence type="evidence at transcript level"/>
<dbReference type="EMBL" id="D50543">
    <property type="protein sequence ID" value="BAA09104.1"/>
    <property type="molecule type" value="Genomic_DNA"/>
</dbReference>
<dbReference type="EMBL" id="AL009126">
    <property type="protein sequence ID" value="CAB12648.1"/>
    <property type="molecule type" value="Genomic_DNA"/>
</dbReference>
<dbReference type="PIR" id="D69802">
    <property type="entry name" value="D69802"/>
</dbReference>
<dbReference type="RefSeq" id="WP_003233607.1">
    <property type="nucleotide sequence ID" value="NZ_OZ025638.1"/>
</dbReference>
<dbReference type="SMR" id="P54717"/>
<dbReference type="FunCoup" id="P54717">
    <property type="interactions" value="2"/>
</dbReference>
<dbReference type="STRING" id="224308.BSU08190"/>
<dbReference type="PaxDb" id="224308-BSU08190"/>
<dbReference type="EnsemblBacteria" id="CAB12648">
    <property type="protein sequence ID" value="CAB12648"/>
    <property type="gene ID" value="BSU_08190"/>
</dbReference>
<dbReference type="GeneID" id="939205"/>
<dbReference type="KEGG" id="bsu:BSU08190"/>
<dbReference type="PATRIC" id="fig|224308.179.peg.885"/>
<dbReference type="eggNOG" id="COG1737">
    <property type="taxonomic scope" value="Bacteria"/>
</dbReference>
<dbReference type="InParanoid" id="P54717"/>
<dbReference type="OrthoDB" id="6590756at2"/>
<dbReference type="PhylomeDB" id="P54717"/>
<dbReference type="BioCyc" id="BSUB:BSU08190-MONOMER"/>
<dbReference type="Proteomes" id="UP000001570">
    <property type="component" value="Chromosome"/>
</dbReference>
<dbReference type="GO" id="GO:0097367">
    <property type="term" value="F:carbohydrate derivative binding"/>
    <property type="evidence" value="ECO:0007669"/>
    <property type="project" value="InterPro"/>
</dbReference>
<dbReference type="GO" id="GO:0003677">
    <property type="term" value="F:DNA binding"/>
    <property type="evidence" value="ECO:0007669"/>
    <property type="project" value="UniProtKB-KW"/>
</dbReference>
<dbReference type="GO" id="GO:0003700">
    <property type="term" value="F:DNA-binding transcription factor activity"/>
    <property type="evidence" value="ECO:0000318"/>
    <property type="project" value="GO_Central"/>
</dbReference>
<dbReference type="GO" id="GO:1901135">
    <property type="term" value="P:carbohydrate derivative metabolic process"/>
    <property type="evidence" value="ECO:0007669"/>
    <property type="project" value="InterPro"/>
</dbReference>
<dbReference type="GO" id="GO:0006355">
    <property type="term" value="P:regulation of DNA-templated transcription"/>
    <property type="evidence" value="ECO:0000318"/>
    <property type="project" value="GO_Central"/>
</dbReference>
<dbReference type="CDD" id="cd05013">
    <property type="entry name" value="SIS_RpiR"/>
    <property type="match status" value="1"/>
</dbReference>
<dbReference type="Gene3D" id="3.40.50.10490">
    <property type="entry name" value="Glucose-6-phosphate isomerase like protein, domain 1"/>
    <property type="match status" value="1"/>
</dbReference>
<dbReference type="Gene3D" id="1.10.10.10">
    <property type="entry name" value="Winged helix-like DNA-binding domain superfamily/Winged helix DNA-binding domain"/>
    <property type="match status" value="1"/>
</dbReference>
<dbReference type="InterPro" id="IPR009057">
    <property type="entry name" value="Homeodomain-like_sf"/>
</dbReference>
<dbReference type="InterPro" id="IPR000281">
    <property type="entry name" value="HTH_RpiR"/>
</dbReference>
<dbReference type="InterPro" id="IPR047640">
    <property type="entry name" value="RpiR-like"/>
</dbReference>
<dbReference type="InterPro" id="IPR035472">
    <property type="entry name" value="RpiR-like_SIS"/>
</dbReference>
<dbReference type="InterPro" id="IPR001347">
    <property type="entry name" value="SIS_dom"/>
</dbReference>
<dbReference type="InterPro" id="IPR046348">
    <property type="entry name" value="SIS_dom_sf"/>
</dbReference>
<dbReference type="InterPro" id="IPR036388">
    <property type="entry name" value="WH-like_DNA-bd_sf"/>
</dbReference>
<dbReference type="PANTHER" id="PTHR30514">
    <property type="entry name" value="GLUCOKINASE"/>
    <property type="match status" value="1"/>
</dbReference>
<dbReference type="PANTHER" id="PTHR30514:SF1">
    <property type="entry name" value="HTH-TYPE TRANSCRIPTIONAL REGULATOR HEXR-RELATED"/>
    <property type="match status" value="1"/>
</dbReference>
<dbReference type="Pfam" id="PF01418">
    <property type="entry name" value="HTH_6"/>
    <property type="match status" value="1"/>
</dbReference>
<dbReference type="Pfam" id="PF01380">
    <property type="entry name" value="SIS"/>
    <property type="match status" value="1"/>
</dbReference>
<dbReference type="SUPFAM" id="SSF46689">
    <property type="entry name" value="Homeodomain-like"/>
    <property type="match status" value="1"/>
</dbReference>
<dbReference type="SUPFAM" id="SSF53697">
    <property type="entry name" value="SIS domain"/>
    <property type="match status" value="1"/>
</dbReference>
<dbReference type="PROSITE" id="PS51071">
    <property type="entry name" value="HTH_RPIR"/>
    <property type="match status" value="1"/>
</dbReference>
<dbReference type="PROSITE" id="PS51464">
    <property type="entry name" value="SIS"/>
    <property type="match status" value="1"/>
</dbReference>
<organism>
    <name type="scientific">Bacillus subtilis (strain 168)</name>
    <dbReference type="NCBI Taxonomy" id="224308"/>
    <lineage>
        <taxon>Bacteria</taxon>
        <taxon>Bacillati</taxon>
        <taxon>Bacillota</taxon>
        <taxon>Bacilli</taxon>
        <taxon>Bacillales</taxon>
        <taxon>Bacillaceae</taxon>
        <taxon>Bacillus</taxon>
    </lineage>
</organism>
<protein>
    <recommendedName>
        <fullName>HTH-type transcriptional regulator GlvR</fullName>
    </recommendedName>
    <alternativeName>
        <fullName>Glv operon regulatory protein</fullName>
    </alternativeName>
</protein>
<evidence type="ECO:0000255" key="1">
    <source>
        <dbReference type="PROSITE-ProRule" id="PRU00390"/>
    </source>
</evidence>
<evidence type="ECO:0000255" key="2">
    <source>
        <dbReference type="PROSITE-ProRule" id="PRU00797"/>
    </source>
</evidence>
<evidence type="ECO:0000269" key="3">
    <source>
    </source>
</evidence>
<reference key="1">
    <citation type="journal article" date="1996" name="Microbiology">
        <title>Determination of a 12 kb nucleotide sequence around the 76 degrees region of the Bacillus subtilis chromosome.</title>
        <authorList>
            <person name="Yamamoto H."/>
            <person name="Uchiyama S."/>
            <person name="Fajar A.N."/>
            <person name="Ogasawara N."/>
            <person name="Sekiguchi J."/>
        </authorList>
    </citation>
    <scope>NUCLEOTIDE SEQUENCE [GENOMIC DNA]</scope>
    <source>
        <strain>168</strain>
    </source>
</reference>
<reference key="2">
    <citation type="journal article" date="1997" name="Nature">
        <title>The complete genome sequence of the Gram-positive bacterium Bacillus subtilis.</title>
        <authorList>
            <person name="Kunst F."/>
            <person name="Ogasawara N."/>
            <person name="Moszer I."/>
            <person name="Albertini A.M."/>
            <person name="Alloni G."/>
            <person name="Azevedo V."/>
            <person name="Bertero M.G."/>
            <person name="Bessieres P."/>
            <person name="Bolotin A."/>
            <person name="Borchert S."/>
            <person name="Borriss R."/>
            <person name="Boursier L."/>
            <person name="Brans A."/>
            <person name="Braun M."/>
            <person name="Brignell S.C."/>
            <person name="Bron S."/>
            <person name="Brouillet S."/>
            <person name="Bruschi C.V."/>
            <person name="Caldwell B."/>
            <person name="Capuano V."/>
            <person name="Carter N.M."/>
            <person name="Choi S.-K."/>
            <person name="Codani J.-J."/>
            <person name="Connerton I.F."/>
            <person name="Cummings N.J."/>
            <person name="Daniel R.A."/>
            <person name="Denizot F."/>
            <person name="Devine K.M."/>
            <person name="Duesterhoeft A."/>
            <person name="Ehrlich S.D."/>
            <person name="Emmerson P.T."/>
            <person name="Entian K.-D."/>
            <person name="Errington J."/>
            <person name="Fabret C."/>
            <person name="Ferrari E."/>
            <person name="Foulger D."/>
            <person name="Fritz C."/>
            <person name="Fujita M."/>
            <person name="Fujita Y."/>
            <person name="Fuma S."/>
            <person name="Galizzi A."/>
            <person name="Galleron N."/>
            <person name="Ghim S.-Y."/>
            <person name="Glaser P."/>
            <person name="Goffeau A."/>
            <person name="Golightly E.J."/>
            <person name="Grandi G."/>
            <person name="Guiseppi G."/>
            <person name="Guy B.J."/>
            <person name="Haga K."/>
            <person name="Haiech J."/>
            <person name="Harwood C.R."/>
            <person name="Henaut A."/>
            <person name="Hilbert H."/>
            <person name="Holsappel S."/>
            <person name="Hosono S."/>
            <person name="Hullo M.-F."/>
            <person name="Itaya M."/>
            <person name="Jones L.-M."/>
            <person name="Joris B."/>
            <person name="Karamata D."/>
            <person name="Kasahara Y."/>
            <person name="Klaerr-Blanchard M."/>
            <person name="Klein C."/>
            <person name="Kobayashi Y."/>
            <person name="Koetter P."/>
            <person name="Koningstein G."/>
            <person name="Krogh S."/>
            <person name="Kumano M."/>
            <person name="Kurita K."/>
            <person name="Lapidus A."/>
            <person name="Lardinois S."/>
            <person name="Lauber J."/>
            <person name="Lazarevic V."/>
            <person name="Lee S.-M."/>
            <person name="Levine A."/>
            <person name="Liu H."/>
            <person name="Masuda S."/>
            <person name="Mauel C."/>
            <person name="Medigue C."/>
            <person name="Medina N."/>
            <person name="Mellado R.P."/>
            <person name="Mizuno M."/>
            <person name="Moestl D."/>
            <person name="Nakai S."/>
            <person name="Noback M."/>
            <person name="Noone D."/>
            <person name="O'Reilly M."/>
            <person name="Ogawa K."/>
            <person name="Ogiwara A."/>
            <person name="Oudega B."/>
            <person name="Park S.-H."/>
            <person name="Parro V."/>
            <person name="Pohl T.M."/>
            <person name="Portetelle D."/>
            <person name="Porwollik S."/>
            <person name="Prescott A.M."/>
            <person name="Presecan E."/>
            <person name="Pujic P."/>
            <person name="Purnelle B."/>
            <person name="Rapoport G."/>
            <person name="Rey M."/>
            <person name="Reynolds S."/>
            <person name="Rieger M."/>
            <person name="Rivolta C."/>
            <person name="Rocha E."/>
            <person name="Roche B."/>
            <person name="Rose M."/>
            <person name="Sadaie Y."/>
            <person name="Sato T."/>
            <person name="Scanlan E."/>
            <person name="Schleich S."/>
            <person name="Schroeter R."/>
            <person name="Scoffone F."/>
            <person name="Sekiguchi J."/>
            <person name="Sekowska A."/>
            <person name="Seror S.J."/>
            <person name="Serror P."/>
            <person name="Shin B.-S."/>
            <person name="Soldo B."/>
            <person name="Sorokin A."/>
            <person name="Tacconi E."/>
            <person name="Takagi T."/>
            <person name="Takahashi H."/>
            <person name="Takemaru K."/>
            <person name="Takeuchi M."/>
            <person name="Tamakoshi A."/>
            <person name="Tanaka T."/>
            <person name="Terpstra P."/>
            <person name="Tognoni A."/>
            <person name="Tosato V."/>
            <person name="Uchiyama S."/>
            <person name="Vandenbol M."/>
            <person name="Vannier F."/>
            <person name="Vassarotti A."/>
            <person name="Viari A."/>
            <person name="Wambutt R."/>
            <person name="Wedler E."/>
            <person name="Wedler H."/>
            <person name="Weitzenegger T."/>
            <person name="Winters P."/>
            <person name="Wipat A."/>
            <person name="Yamamoto H."/>
            <person name="Yamane K."/>
            <person name="Yasumoto K."/>
            <person name="Yata K."/>
            <person name="Yoshida K."/>
            <person name="Yoshikawa H.-F."/>
            <person name="Zumstein E."/>
            <person name="Yoshikawa H."/>
            <person name="Danchin A."/>
        </authorList>
    </citation>
    <scope>NUCLEOTIDE SEQUENCE [LARGE SCALE GENOMIC DNA]</scope>
    <source>
        <strain>168</strain>
    </source>
</reference>
<reference key="3">
    <citation type="journal article" date="2001" name="J. Bacteriol.">
        <title>Regulation of the glv operon in Bacillus subtilis: YfiA (GlvR) is a positive regulator of the operon that is repressed through CcpA and cre.</title>
        <authorList>
            <person name="Yamamoto H."/>
            <person name="Serizawa M."/>
            <person name="Thompson J."/>
            <person name="Sekiguchi J."/>
        </authorList>
    </citation>
    <scope>FUNCTION</scope>
</reference>
<sequence>MQLEELINQHYSKLNDNDFHILKYILNHKHTCYHLGIDALAKACSVSRSSILRLAQKLGFSGYSEFRVFLKWEDQPEEGESMSFEKLLDDIEANLKFLRTKDMTDMCQLIDAADRIFVYGSGNAQKICARDLQRMFIPRHRYLILIEDTNEFNLMRDDFKVNDLFIIISLSGETPELIPQARMLSAKGIPFISITNLKNNVLAQLTPHNLYATSKPVTLSDRTEIVAFAPFFLVGEALFRAYVDYKEAEKNDNE</sequence>